<proteinExistence type="evidence at transcript level"/>
<gene>
    <name type="primary">TCTP</name>
</gene>
<dbReference type="EMBL" id="Y08158">
    <property type="protein sequence ID" value="CAA69350.1"/>
    <property type="molecule type" value="mRNA"/>
</dbReference>
<dbReference type="SMR" id="O18477"/>
<dbReference type="GO" id="GO:0005737">
    <property type="term" value="C:cytoplasm"/>
    <property type="evidence" value="ECO:0007669"/>
    <property type="project" value="UniProtKB-SubCell"/>
</dbReference>
<dbReference type="GO" id="GO:0005509">
    <property type="term" value="F:calcium ion binding"/>
    <property type="evidence" value="ECO:0007669"/>
    <property type="project" value="TreeGrafter"/>
</dbReference>
<dbReference type="FunFam" id="2.170.150.10:FF:000002">
    <property type="entry name" value="Translationally-controlled tumor protein homolog"/>
    <property type="match status" value="1"/>
</dbReference>
<dbReference type="Gene3D" id="2.170.150.10">
    <property type="entry name" value="Metal Binding Protein, Guanine Nucleotide Exchange Factor, Chain A"/>
    <property type="match status" value="1"/>
</dbReference>
<dbReference type="InterPro" id="IPR011057">
    <property type="entry name" value="Mss4-like_sf"/>
</dbReference>
<dbReference type="InterPro" id="IPR011323">
    <property type="entry name" value="Mss4/transl-control_tumour"/>
</dbReference>
<dbReference type="InterPro" id="IPR034737">
    <property type="entry name" value="TCTP"/>
</dbReference>
<dbReference type="InterPro" id="IPR018103">
    <property type="entry name" value="Translation_control_tumour_CS"/>
</dbReference>
<dbReference type="InterPro" id="IPR018105">
    <property type="entry name" value="Translational_control_tumour_p"/>
</dbReference>
<dbReference type="PANTHER" id="PTHR11991">
    <property type="entry name" value="TRANSLATIONALLY CONTROLLED TUMOR PROTEIN-RELATED"/>
    <property type="match status" value="1"/>
</dbReference>
<dbReference type="PANTHER" id="PTHR11991:SF0">
    <property type="entry name" value="TRANSLATIONALLY-CONTROLLED TUMOR PROTEIN"/>
    <property type="match status" value="1"/>
</dbReference>
<dbReference type="Pfam" id="PF00838">
    <property type="entry name" value="TCTP"/>
    <property type="match status" value="1"/>
</dbReference>
<dbReference type="PRINTS" id="PR01653">
    <property type="entry name" value="TCTPROTEIN"/>
</dbReference>
<dbReference type="SUPFAM" id="SSF51316">
    <property type="entry name" value="Mss4-like"/>
    <property type="match status" value="1"/>
</dbReference>
<dbReference type="PROSITE" id="PS01002">
    <property type="entry name" value="TCTP_1"/>
    <property type="match status" value="1"/>
</dbReference>
<dbReference type="PROSITE" id="PS01003">
    <property type="entry name" value="TCTP_2"/>
    <property type="match status" value="1"/>
</dbReference>
<dbReference type="PROSITE" id="PS51797">
    <property type="entry name" value="TCTP_3"/>
    <property type="match status" value="1"/>
</dbReference>
<comment type="function">
    <text evidence="1">Involved in calcium binding and microtubule stabilization.</text>
</comment>
<comment type="subcellular location">
    <subcellularLocation>
        <location evidence="1">Cytoplasm</location>
    </subcellularLocation>
</comment>
<comment type="induction">
    <text>By cadmium.</text>
</comment>
<comment type="similarity">
    <text evidence="2">Belongs to the TCTP family.</text>
</comment>
<evidence type="ECO:0000250" key="1"/>
<evidence type="ECO:0000255" key="2">
    <source>
        <dbReference type="PROSITE-ProRule" id="PRU01133"/>
    </source>
</evidence>
<protein>
    <recommendedName>
        <fullName>Translationally-controlled tumor protein homolog</fullName>
        <shortName>TCTP</shortName>
    </recommendedName>
</protein>
<name>TCTP_LUMRU</name>
<sequence>MIIFKDVFPGVELFSDSFPVSLVNETVYKVKGKLRTDTFAIDDKAIGGNASAEGGEEGTDAASKQGVDIVMNSRLVEYALSKKDYMTHIKSYMKSVKDKLQETKPADSELFQKNVQPFIKEVLNDFKEYQLFCGESMGPEGMLALMKWDGETPYMFFFKHGLDEEKV</sequence>
<feature type="chain" id="PRO_0000211288" description="Translationally-controlled tumor protein homolog">
    <location>
        <begin position="1"/>
        <end position="167"/>
    </location>
</feature>
<feature type="domain" description="TCTP" evidence="2">
    <location>
        <begin position="1"/>
        <end position="167"/>
    </location>
</feature>
<keyword id="KW-0106">Calcium</keyword>
<keyword id="KW-0963">Cytoplasm</keyword>
<reference key="1">
    <citation type="journal article" date="1998" name="Biochim. Biophys. Acta">
        <title>Identification of heavy metal induced changes in the expression patterns of the translationally controlled tumour protein (TCTP) in the earthworm Lumbricus rubellus.</title>
        <authorList>
            <person name="Stuerzenbaum S.R."/>
            <person name="Kille P."/>
            <person name="Morgan A.J."/>
        </authorList>
    </citation>
    <scope>NUCLEOTIDE SEQUENCE [MRNA]</scope>
</reference>
<organism>
    <name type="scientific">Lumbricus rubellus</name>
    <name type="common">Humus earthworm</name>
    <dbReference type="NCBI Taxonomy" id="35632"/>
    <lineage>
        <taxon>Eukaryota</taxon>
        <taxon>Metazoa</taxon>
        <taxon>Spiralia</taxon>
        <taxon>Lophotrochozoa</taxon>
        <taxon>Annelida</taxon>
        <taxon>Clitellata</taxon>
        <taxon>Oligochaeta</taxon>
        <taxon>Crassiclitellata</taxon>
        <taxon>Lumbricina</taxon>
        <taxon>Lumbricidae</taxon>
        <taxon>Lumbricinae</taxon>
        <taxon>Lumbricus</taxon>
    </lineage>
</organism>
<accession>O18477</accession>